<proteinExistence type="evidence at protein level"/>
<organism>
    <name type="scientific">Ranoidea caerulea</name>
    <name type="common">Green tree frog</name>
    <name type="synonym">Litoria caerulea</name>
    <dbReference type="NCBI Taxonomy" id="30344"/>
    <lineage>
        <taxon>Eukaryota</taxon>
        <taxon>Metazoa</taxon>
        <taxon>Chordata</taxon>
        <taxon>Craniata</taxon>
        <taxon>Vertebrata</taxon>
        <taxon>Euteleostomi</taxon>
        <taxon>Amphibia</taxon>
        <taxon>Batrachia</taxon>
        <taxon>Anura</taxon>
        <taxon>Neobatrachia</taxon>
        <taxon>Hyloidea</taxon>
        <taxon>Hylidae</taxon>
        <taxon>Pelodryadinae</taxon>
        <taxon>Ranoidea</taxon>
    </lineage>
</organism>
<accession>P56242</accession>
<dbReference type="GO" id="GO:0005576">
    <property type="term" value="C:extracellular region"/>
    <property type="evidence" value="ECO:0007669"/>
    <property type="project" value="UniProtKB-SubCell"/>
</dbReference>
<dbReference type="GO" id="GO:0042742">
    <property type="term" value="P:defense response to bacterium"/>
    <property type="evidence" value="ECO:0007669"/>
    <property type="project" value="UniProtKB-KW"/>
</dbReference>
<reference key="1">
    <citation type="journal article" date="1993" name="J. Chem. Res.">
        <title>Peptides from Australian frogs. The structures of the caerins from Litoria caerula.</title>
        <authorList>
            <person name="Stone D.J.M."/>
            <person name="Waugh R.J."/>
            <person name="Bowie J.H."/>
            <person name="Wallace J.C."/>
            <person name="Tyler M.J."/>
        </authorList>
    </citation>
    <scope>PROTEIN SEQUENCE</scope>
    <scope>MASS SPECTROMETRY</scope>
    <source>
        <tissue>Parotoid gland</tissue>
    </source>
</reference>
<feature type="peptide" id="PRO_0000043752" description="Caerin-4.1">
    <location>
        <begin position="1"/>
        <end position="23"/>
    </location>
</feature>
<evidence type="ECO:0000269" key="1">
    <source ref="1"/>
</evidence>
<evidence type="ECO:0000305" key="2"/>
<comment type="function">
    <text>Antibacterial peptide, that adopts an alpha helical conformation which can disrupt bacterial membranes. Each caerin displays a different antimicrobial specificity.</text>
</comment>
<comment type="subcellular location">
    <subcellularLocation>
        <location>Secreted</location>
    </subcellularLocation>
</comment>
<comment type="tissue specificity">
    <text>Expressed by the skin parotoid and/or rostral glands.</text>
</comment>
<comment type="mass spectrometry" mass="2326.0" method="FAB" evidence="1"/>
<comment type="similarity">
    <text evidence="2">Belongs to the frog skin active peptide (FSAP) family. Caerin subfamily.</text>
</comment>
<sequence length="23" mass="2329">GLWQKIKSAAGDLASGIVEGIKS</sequence>
<protein>
    <recommendedName>
        <fullName>Caerin-4.1</fullName>
    </recommendedName>
</protein>
<keyword id="KW-0878">Amphibian defense peptide</keyword>
<keyword id="KW-0044">Antibiotic</keyword>
<keyword id="KW-0929">Antimicrobial</keyword>
<keyword id="KW-0903">Direct protein sequencing</keyword>
<keyword id="KW-0964">Secreted</keyword>
<name>CR41_RANCA</name>